<name>PARE_RICBR</name>
<keyword id="KW-0067">ATP-binding</keyword>
<keyword id="KW-0238">DNA-binding</keyword>
<keyword id="KW-0413">Isomerase</keyword>
<keyword id="KW-0460">Magnesium</keyword>
<keyword id="KW-0479">Metal-binding</keyword>
<keyword id="KW-0547">Nucleotide-binding</keyword>
<keyword id="KW-0799">Topoisomerase</keyword>
<proteinExistence type="inferred from homology"/>
<feature type="chain" id="PRO_0000273116" description="DNA topoisomerase 4 subunit B">
    <location>
        <begin position="1"/>
        <end position="662"/>
    </location>
</feature>
<feature type="domain" description="Toprim" evidence="1">
    <location>
        <begin position="439"/>
        <end position="553"/>
    </location>
</feature>
<feature type="binding site" evidence="1">
    <location>
        <position position="20"/>
    </location>
    <ligand>
        <name>ATP</name>
        <dbReference type="ChEBI" id="CHEBI:30616"/>
    </ligand>
</feature>
<feature type="binding site" evidence="1">
    <location>
        <position position="60"/>
    </location>
    <ligand>
        <name>ATP</name>
        <dbReference type="ChEBI" id="CHEBI:30616"/>
    </ligand>
</feature>
<feature type="binding site" evidence="1">
    <location>
        <position position="87"/>
    </location>
    <ligand>
        <name>ATP</name>
        <dbReference type="ChEBI" id="CHEBI:30616"/>
    </ligand>
</feature>
<feature type="binding site" evidence="1">
    <location>
        <begin position="129"/>
        <end position="135"/>
    </location>
    <ligand>
        <name>ATP</name>
        <dbReference type="ChEBI" id="CHEBI:30616"/>
    </ligand>
</feature>
<feature type="binding site" evidence="1">
    <location>
        <position position="359"/>
    </location>
    <ligand>
        <name>ATP</name>
        <dbReference type="ChEBI" id="CHEBI:30616"/>
    </ligand>
</feature>
<feature type="binding site" evidence="1">
    <location>
        <position position="445"/>
    </location>
    <ligand>
        <name>Mg(2+)</name>
        <dbReference type="ChEBI" id="CHEBI:18420"/>
        <label>1</label>
        <note>catalytic</note>
    </ligand>
</feature>
<feature type="binding site" evidence="1">
    <location>
        <position position="518"/>
    </location>
    <ligand>
        <name>Mg(2+)</name>
        <dbReference type="ChEBI" id="CHEBI:18420"/>
        <label>1</label>
        <note>catalytic</note>
    </ligand>
</feature>
<feature type="binding site" evidence="1">
    <location>
        <position position="518"/>
    </location>
    <ligand>
        <name>Mg(2+)</name>
        <dbReference type="ChEBI" id="CHEBI:18420"/>
        <label>2</label>
    </ligand>
</feature>
<feature type="binding site" evidence="1">
    <location>
        <position position="520"/>
    </location>
    <ligand>
        <name>Mg(2+)</name>
        <dbReference type="ChEBI" id="CHEBI:18420"/>
        <label>2</label>
    </ligand>
</feature>
<feature type="site" description="Interaction with DNA" evidence="1">
    <location>
        <position position="470"/>
    </location>
</feature>
<feature type="site" description="Interaction with DNA" evidence="1">
    <location>
        <position position="473"/>
    </location>
</feature>
<feature type="site" description="Interaction with DNA" evidence="1">
    <location>
        <position position="525"/>
    </location>
</feature>
<feature type="site" description="Interaction with DNA" evidence="1">
    <location>
        <position position="641"/>
    </location>
</feature>
<organism>
    <name type="scientific">Rickettsia bellii (strain RML369-C)</name>
    <dbReference type="NCBI Taxonomy" id="336407"/>
    <lineage>
        <taxon>Bacteria</taxon>
        <taxon>Pseudomonadati</taxon>
        <taxon>Pseudomonadota</taxon>
        <taxon>Alphaproteobacteria</taxon>
        <taxon>Rickettsiales</taxon>
        <taxon>Rickettsiaceae</taxon>
        <taxon>Rickettsieae</taxon>
        <taxon>Rickettsia</taxon>
        <taxon>belli group</taxon>
    </lineage>
</organism>
<accession>Q1RK03</accession>
<evidence type="ECO:0000255" key="1">
    <source>
        <dbReference type="HAMAP-Rule" id="MF_00938"/>
    </source>
</evidence>
<gene>
    <name evidence="1" type="primary">parE</name>
    <name type="ordered locus">RBE_0230</name>
</gene>
<protein>
    <recommendedName>
        <fullName evidence="1">DNA topoisomerase 4 subunit B</fullName>
        <ecNumber evidence="1">5.6.2.2</ecNumber>
    </recommendedName>
    <alternativeName>
        <fullName evidence="1">Topoisomerase IV subunit B</fullName>
    </alternativeName>
</protein>
<reference key="1">
    <citation type="journal article" date="2006" name="PLoS Genet.">
        <title>Genome sequence of Rickettsia bellii illuminates the role of amoebae in gene exchanges between intracellular pathogens.</title>
        <authorList>
            <person name="Ogata H."/>
            <person name="La Scola B."/>
            <person name="Audic S."/>
            <person name="Renesto P."/>
            <person name="Blanc G."/>
            <person name="Robert C."/>
            <person name="Fournier P.-E."/>
            <person name="Claverie J.-M."/>
            <person name="Raoult D."/>
        </authorList>
    </citation>
    <scope>NUCLEOTIDE SEQUENCE [LARGE SCALE GENOMIC DNA]</scope>
    <source>
        <strain>RML369-C</strain>
    </source>
</reference>
<comment type="function">
    <text evidence="1">Topoisomerase IV is essential for chromosome segregation. It relaxes supercoiled DNA. Performs the decatenation events required during the replication of a circular DNA molecule.</text>
</comment>
<comment type="catalytic activity">
    <reaction evidence="1">
        <text>ATP-dependent breakage, passage and rejoining of double-stranded DNA.</text>
        <dbReference type="EC" id="5.6.2.2"/>
    </reaction>
</comment>
<comment type="cofactor">
    <cofactor evidence="1">
        <name>Mg(2+)</name>
        <dbReference type="ChEBI" id="CHEBI:18420"/>
    </cofactor>
    <cofactor evidence="1">
        <name>Mn(2+)</name>
        <dbReference type="ChEBI" id="CHEBI:29035"/>
    </cofactor>
    <cofactor evidence="1">
        <name>Ca(2+)</name>
        <dbReference type="ChEBI" id="CHEBI:29108"/>
    </cofactor>
    <text evidence="1">Binds two Mg(2+) per subunit. The magnesium ions form salt bridges with both the protein and the DNA. Can also accept other divalent metal cations, such as Mn(2+) or Ca(2+).</text>
</comment>
<comment type="subunit">
    <text evidence="1">Heterotetramer composed of ParC and ParE.</text>
</comment>
<comment type="similarity">
    <text evidence="1">Belongs to the type II topoisomerase family. ParE type 1 subfamily.</text>
</comment>
<sequence length="662" mass="73986">MSDLFSFNKEKKTKIINNTYSAKDIEVLEGLEPVRKRPGMYIGGTDLNAMHHLVSEVLDNSMDEAVAGFASIITIKMHQDHSITISDNGRGIPIDNHPKFPNKSALEVILTTLHSGGKFSSNVYQTAGGLHGVGVSVVNALAEHLEIKVYKQGKLYKQSYAKGEKLTELICEEAPKRLKGTSINFIPDPEIFGDKIHFNPKKVYELARSKAYLYRGVTIEWECEIEASSDVPKKALINFPNGLKDYLSSKITPDDLITTEIFSGNVESEQDGIKLEWAICWQNNDSSAFIQSYCNTVPTPLGGTHEQGLKSALLRGLKAYGEMVGNKKTANLAIEDILETASVVLSIFIAEPTFQGQTKEKLVSQGVSKPAENIIKDHFDHFLSSNKTIANNLLEHFIAIAEFRLNKKNEKTISRKNATQKLRLPGKLADCTRTSPEGTELFIVEGDSAGGSAKQARNRETQAVLPLWGKVLNVASSTLEKIVNNQAIQDLEIALACGSMKNYKKENLRYEKIIIMTDADVDGAHIASLLMTFFFLRMPKLVEDGHLYLAKPPLYRLTQSNKTYYANDEEEKAKLTDKLSKSSKAKIEVGRFKGLGEMMPMQLKETTMHPEKRSLLKVTLEDFQNVDKIVDDLMGKKPEKRFQFIYEQALVKMDKIINELDI</sequence>
<dbReference type="EC" id="5.6.2.2" evidence="1"/>
<dbReference type="EMBL" id="CP000087">
    <property type="protein sequence ID" value="ABE04311.1"/>
    <property type="molecule type" value="Genomic_DNA"/>
</dbReference>
<dbReference type="RefSeq" id="WP_011476924.1">
    <property type="nucleotide sequence ID" value="NC_007940.1"/>
</dbReference>
<dbReference type="SMR" id="Q1RK03"/>
<dbReference type="KEGG" id="rbe:RBE_0230"/>
<dbReference type="eggNOG" id="COG0187">
    <property type="taxonomic scope" value="Bacteria"/>
</dbReference>
<dbReference type="HOGENOM" id="CLU_006146_1_2_5"/>
<dbReference type="OrthoDB" id="9802808at2"/>
<dbReference type="Proteomes" id="UP000001951">
    <property type="component" value="Chromosome"/>
</dbReference>
<dbReference type="GO" id="GO:0005694">
    <property type="term" value="C:chromosome"/>
    <property type="evidence" value="ECO:0007669"/>
    <property type="project" value="InterPro"/>
</dbReference>
<dbReference type="GO" id="GO:0005524">
    <property type="term" value="F:ATP binding"/>
    <property type="evidence" value="ECO:0007669"/>
    <property type="project" value="UniProtKB-UniRule"/>
</dbReference>
<dbReference type="GO" id="GO:0003677">
    <property type="term" value="F:DNA binding"/>
    <property type="evidence" value="ECO:0007669"/>
    <property type="project" value="UniProtKB-UniRule"/>
</dbReference>
<dbReference type="GO" id="GO:0003918">
    <property type="term" value="F:DNA topoisomerase type II (double strand cut, ATP-hydrolyzing) activity"/>
    <property type="evidence" value="ECO:0007669"/>
    <property type="project" value="UniProtKB-UniRule"/>
</dbReference>
<dbReference type="GO" id="GO:0046872">
    <property type="term" value="F:metal ion binding"/>
    <property type="evidence" value="ECO:0007669"/>
    <property type="project" value="UniProtKB-KW"/>
</dbReference>
<dbReference type="GO" id="GO:0007059">
    <property type="term" value="P:chromosome segregation"/>
    <property type="evidence" value="ECO:0007669"/>
    <property type="project" value="UniProtKB-UniRule"/>
</dbReference>
<dbReference type="GO" id="GO:0006265">
    <property type="term" value="P:DNA topological change"/>
    <property type="evidence" value="ECO:0007669"/>
    <property type="project" value="UniProtKB-UniRule"/>
</dbReference>
<dbReference type="CDD" id="cd16928">
    <property type="entry name" value="HATPase_GyrB-like"/>
    <property type="match status" value="1"/>
</dbReference>
<dbReference type="CDD" id="cd00822">
    <property type="entry name" value="TopoII_Trans_DNA_gyrase"/>
    <property type="match status" value="1"/>
</dbReference>
<dbReference type="FunFam" id="3.30.565.10:FF:000002">
    <property type="entry name" value="DNA gyrase subunit B"/>
    <property type="match status" value="1"/>
</dbReference>
<dbReference type="FunFam" id="3.40.50.670:FF:000006">
    <property type="entry name" value="DNA topoisomerase (ATP-hydrolyzing)"/>
    <property type="match status" value="1"/>
</dbReference>
<dbReference type="Gene3D" id="3.30.230.10">
    <property type="match status" value="1"/>
</dbReference>
<dbReference type="Gene3D" id="3.40.50.670">
    <property type="match status" value="1"/>
</dbReference>
<dbReference type="Gene3D" id="3.30.565.10">
    <property type="entry name" value="Histidine kinase-like ATPase, C-terminal domain"/>
    <property type="match status" value="1"/>
</dbReference>
<dbReference type="HAMAP" id="MF_00938">
    <property type="entry name" value="ParE_type1"/>
    <property type="match status" value="1"/>
</dbReference>
<dbReference type="InterPro" id="IPR002288">
    <property type="entry name" value="DNA_gyrase_B_C"/>
</dbReference>
<dbReference type="InterPro" id="IPR036890">
    <property type="entry name" value="HATPase_C_sf"/>
</dbReference>
<dbReference type="InterPro" id="IPR020568">
    <property type="entry name" value="Ribosomal_Su5_D2-typ_SF"/>
</dbReference>
<dbReference type="InterPro" id="IPR014721">
    <property type="entry name" value="Ribsml_uS5_D2-typ_fold_subgr"/>
</dbReference>
<dbReference type="InterPro" id="IPR001241">
    <property type="entry name" value="Topo_IIA"/>
</dbReference>
<dbReference type="InterPro" id="IPR013760">
    <property type="entry name" value="Topo_IIA-like_dom_sf"/>
</dbReference>
<dbReference type="InterPro" id="IPR000565">
    <property type="entry name" value="Topo_IIA_B"/>
</dbReference>
<dbReference type="InterPro" id="IPR013759">
    <property type="entry name" value="Topo_IIA_B_C"/>
</dbReference>
<dbReference type="InterPro" id="IPR013506">
    <property type="entry name" value="Topo_IIA_bsu_dom2"/>
</dbReference>
<dbReference type="InterPro" id="IPR018522">
    <property type="entry name" value="TopoIIA_CS"/>
</dbReference>
<dbReference type="InterPro" id="IPR005737">
    <property type="entry name" value="TopoIV_B_Gneg"/>
</dbReference>
<dbReference type="InterPro" id="IPR006171">
    <property type="entry name" value="TOPRIM_dom"/>
</dbReference>
<dbReference type="NCBIfam" id="TIGR01055">
    <property type="entry name" value="parE_Gneg"/>
    <property type="match status" value="1"/>
</dbReference>
<dbReference type="PANTHER" id="PTHR45866:SF1">
    <property type="entry name" value="DNA GYRASE SUBUNIT B, MITOCHONDRIAL"/>
    <property type="match status" value="1"/>
</dbReference>
<dbReference type="PANTHER" id="PTHR45866">
    <property type="entry name" value="DNA GYRASE/TOPOISOMERASE SUBUNIT B"/>
    <property type="match status" value="1"/>
</dbReference>
<dbReference type="Pfam" id="PF00204">
    <property type="entry name" value="DNA_gyraseB"/>
    <property type="match status" value="1"/>
</dbReference>
<dbReference type="Pfam" id="PF00986">
    <property type="entry name" value="DNA_gyraseB_C"/>
    <property type="match status" value="1"/>
</dbReference>
<dbReference type="Pfam" id="PF02518">
    <property type="entry name" value="HATPase_c"/>
    <property type="match status" value="1"/>
</dbReference>
<dbReference type="Pfam" id="PF01751">
    <property type="entry name" value="Toprim"/>
    <property type="match status" value="1"/>
</dbReference>
<dbReference type="PRINTS" id="PR01159">
    <property type="entry name" value="DNAGYRASEB"/>
</dbReference>
<dbReference type="PRINTS" id="PR00418">
    <property type="entry name" value="TPI2FAMILY"/>
</dbReference>
<dbReference type="SMART" id="SM00387">
    <property type="entry name" value="HATPase_c"/>
    <property type="match status" value="1"/>
</dbReference>
<dbReference type="SMART" id="SM00433">
    <property type="entry name" value="TOP2c"/>
    <property type="match status" value="1"/>
</dbReference>
<dbReference type="SUPFAM" id="SSF55874">
    <property type="entry name" value="ATPase domain of HSP90 chaperone/DNA topoisomerase II/histidine kinase"/>
    <property type="match status" value="1"/>
</dbReference>
<dbReference type="SUPFAM" id="SSF54211">
    <property type="entry name" value="Ribosomal protein S5 domain 2-like"/>
    <property type="match status" value="1"/>
</dbReference>
<dbReference type="SUPFAM" id="SSF56719">
    <property type="entry name" value="Type II DNA topoisomerase"/>
    <property type="match status" value="1"/>
</dbReference>
<dbReference type="PROSITE" id="PS00177">
    <property type="entry name" value="TOPOISOMERASE_II"/>
    <property type="match status" value="1"/>
</dbReference>
<dbReference type="PROSITE" id="PS50880">
    <property type="entry name" value="TOPRIM"/>
    <property type="match status" value="1"/>
</dbReference>